<keyword id="KW-0687">Ribonucleoprotein</keyword>
<keyword id="KW-0689">Ribosomal protein</keyword>
<keyword id="KW-0694">RNA-binding</keyword>
<keyword id="KW-0699">rRNA-binding</keyword>
<dbReference type="EMBL" id="CP000687">
    <property type="protein sequence ID" value="ABY70349.1"/>
    <property type="molecule type" value="Genomic_DNA"/>
</dbReference>
<dbReference type="RefSeq" id="WP_005539416.1">
    <property type="nucleotide sequence ID" value="NC_010278.1"/>
</dbReference>
<dbReference type="SMR" id="B0BST5"/>
<dbReference type="GeneID" id="93298793"/>
<dbReference type="KEGG" id="apj:APJL_1799"/>
<dbReference type="HOGENOM" id="CLU_144911_0_1_6"/>
<dbReference type="Proteomes" id="UP000008547">
    <property type="component" value="Chromosome"/>
</dbReference>
<dbReference type="GO" id="GO:0005737">
    <property type="term" value="C:cytoplasm"/>
    <property type="evidence" value="ECO:0007669"/>
    <property type="project" value="UniProtKB-ARBA"/>
</dbReference>
<dbReference type="GO" id="GO:0015935">
    <property type="term" value="C:small ribosomal subunit"/>
    <property type="evidence" value="ECO:0007669"/>
    <property type="project" value="InterPro"/>
</dbReference>
<dbReference type="GO" id="GO:0019843">
    <property type="term" value="F:rRNA binding"/>
    <property type="evidence" value="ECO:0007669"/>
    <property type="project" value="UniProtKB-UniRule"/>
</dbReference>
<dbReference type="GO" id="GO:0003735">
    <property type="term" value="F:structural constituent of ribosome"/>
    <property type="evidence" value="ECO:0007669"/>
    <property type="project" value="InterPro"/>
</dbReference>
<dbReference type="GO" id="GO:0000028">
    <property type="term" value="P:ribosomal small subunit assembly"/>
    <property type="evidence" value="ECO:0007669"/>
    <property type="project" value="TreeGrafter"/>
</dbReference>
<dbReference type="GO" id="GO:0006412">
    <property type="term" value="P:translation"/>
    <property type="evidence" value="ECO:0007669"/>
    <property type="project" value="UniProtKB-UniRule"/>
</dbReference>
<dbReference type="FunFam" id="3.30.860.10:FF:000001">
    <property type="entry name" value="30S ribosomal protein S19"/>
    <property type="match status" value="1"/>
</dbReference>
<dbReference type="Gene3D" id="3.30.860.10">
    <property type="entry name" value="30s Ribosomal Protein S19, Chain A"/>
    <property type="match status" value="1"/>
</dbReference>
<dbReference type="HAMAP" id="MF_00531">
    <property type="entry name" value="Ribosomal_uS19"/>
    <property type="match status" value="1"/>
</dbReference>
<dbReference type="InterPro" id="IPR002222">
    <property type="entry name" value="Ribosomal_uS19"/>
</dbReference>
<dbReference type="InterPro" id="IPR005732">
    <property type="entry name" value="Ribosomal_uS19_bac-type"/>
</dbReference>
<dbReference type="InterPro" id="IPR020934">
    <property type="entry name" value="Ribosomal_uS19_CS"/>
</dbReference>
<dbReference type="InterPro" id="IPR023575">
    <property type="entry name" value="Ribosomal_uS19_SF"/>
</dbReference>
<dbReference type="NCBIfam" id="TIGR01050">
    <property type="entry name" value="rpsS_bact"/>
    <property type="match status" value="1"/>
</dbReference>
<dbReference type="PANTHER" id="PTHR11880">
    <property type="entry name" value="RIBOSOMAL PROTEIN S19P FAMILY MEMBER"/>
    <property type="match status" value="1"/>
</dbReference>
<dbReference type="PANTHER" id="PTHR11880:SF8">
    <property type="entry name" value="SMALL RIBOSOMAL SUBUNIT PROTEIN US19M"/>
    <property type="match status" value="1"/>
</dbReference>
<dbReference type="Pfam" id="PF00203">
    <property type="entry name" value="Ribosomal_S19"/>
    <property type="match status" value="1"/>
</dbReference>
<dbReference type="PIRSF" id="PIRSF002144">
    <property type="entry name" value="Ribosomal_S19"/>
    <property type="match status" value="1"/>
</dbReference>
<dbReference type="PRINTS" id="PR00975">
    <property type="entry name" value="RIBOSOMALS19"/>
</dbReference>
<dbReference type="SUPFAM" id="SSF54570">
    <property type="entry name" value="Ribosomal protein S19"/>
    <property type="match status" value="1"/>
</dbReference>
<dbReference type="PROSITE" id="PS00323">
    <property type="entry name" value="RIBOSOMAL_S19"/>
    <property type="match status" value="1"/>
</dbReference>
<proteinExistence type="inferred from homology"/>
<organism>
    <name type="scientific">Actinobacillus pleuropneumoniae serotype 3 (strain JL03)</name>
    <dbReference type="NCBI Taxonomy" id="434271"/>
    <lineage>
        <taxon>Bacteria</taxon>
        <taxon>Pseudomonadati</taxon>
        <taxon>Pseudomonadota</taxon>
        <taxon>Gammaproteobacteria</taxon>
        <taxon>Pasteurellales</taxon>
        <taxon>Pasteurellaceae</taxon>
        <taxon>Actinobacillus</taxon>
    </lineage>
</organism>
<reference key="1">
    <citation type="journal article" date="2008" name="PLoS ONE">
        <title>Genome biology of Actinobacillus pleuropneumoniae JL03, an isolate of serotype 3 prevalent in China.</title>
        <authorList>
            <person name="Xu Z."/>
            <person name="Zhou Y."/>
            <person name="Li L."/>
            <person name="Zhou R."/>
            <person name="Xiao S."/>
            <person name="Wan Y."/>
            <person name="Zhang S."/>
            <person name="Wang K."/>
            <person name="Li W."/>
            <person name="Li L."/>
            <person name="Jin H."/>
            <person name="Kang M."/>
            <person name="Dalai B."/>
            <person name="Li T."/>
            <person name="Liu L."/>
            <person name="Cheng Y."/>
            <person name="Zhang L."/>
            <person name="Xu T."/>
            <person name="Zheng H."/>
            <person name="Pu S."/>
            <person name="Wang B."/>
            <person name="Gu W."/>
            <person name="Zhang X.L."/>
            <person name="Zhu G.-F."/>
            <person name="Wang S."/>
            <person name="Zhao G.-P."/>
            <person name="Chen H."/>
        </authorList>
    </citation>
    <scope>NUCLEOTIDE SEQUENCE [LARGE SCALE GENOMIC DNA]</scope>
    <source>
        <strain>JL03</strain>
    </source>
</reference>
<accession>B0BST5</accession>
<gene>
    <name evidence="1" type="primary">rpsS</name>
    <name type="ordered locus">APJL_1799</name>
</gene>
<feature type="chain" id="PRO_1000127920" description="Small ribosomal subunit protein uS19">
    <location>
        <begin position="1"/>
        <end position="91"/>
    </location>
</feature>
<name>RS19_ACTPJ</name>
<comment type="function">
    <text evidence="1">Protein S19 forms a complex with S13 that binds strongly to the 16S ribosomal RNA.</text>
</comment>
<comment type="similarity">
    <text evidence="1">Belongs to the universal ribosomal protein uS19 family.</text>
</comment>
<sequence>MPRSLKKGPFLDLHLLKKVEKAVESGDKKPIKTWSRRSMIIPSMIGLTIAVHNGRQHVPVYVSDEMIGHKLGEFAPTRTYRGHAADKKAKK</sequence>
<evidence type="ECO:0000255" key="1">
    <source>
        <dbReference type="HAMAP-Rule" id="MF_00531"/>
    </source>
</evidence>
<evidence type="ECO:0000305" key="2"/>
<protein>
    <recommendedName>
        <fullName evidence="1">Small ribosomal subunit protein uS19</fullName>
    </recommendedName>
    <alternativeName>
        <fullName evidence="2">30S ribosomal protein S19</fullName>
    </alternativeName>
</protein>